<keyword id="KW-1015">Disulfide bond</keyword>
<keyword id="KW-0256">Endoplasmic reticulum</keyword>
<keyword id="KW-1185">Reference proteome</keyword>
<keyword id="KW-0677">Repeat</keyword>
<keyword id="KW-0732">Signal</keyword>
<evidence type="ECO:0000250" key="1"/>
<evidence type="ECO:0000255" key="2"/>
<evidence type="ECO:0000255" key="3">
    <source>
        <dbReference type="PROSITE-ProRule" id="PRU01262"/>
    </source>
</evidence>
<evidence type="ECO:0000269" key="4">
    <source>
    </source>
</evidence>
<dbReference type="EMBL" id="CR760240">
    <property type="protein sequence ID" value="CAJ82824.1"/>
    <property type="molecule type" value="mRNA"/>
</dbReference>
<dbReference type="FunCoup" id="Q28IT1">
    <property type="interactions" value="2871"/>
</dbReference>
<dbReference type="STRING" id="8364.ENSXETP00000012824"/>
<dbReference type="PaxDb" id="8364-ENSXETP00000062950"/>
<dbReference type="eggNOG" id="KOG3394">
    <property type="taxonomic scope" value="Eukaryota"/>
</dbReference>
<dbReference type="InParanoid" id="Q28IT1"/>
<dbReference type="Proteomes" id="UP000008143">
    <property type="component" value="Unplaced"/>
</dbReference>
<dbReference type="GO" id="GO:0005788">
    <property type="term" value="C:endoplasmic reticulum lumen"/>
    <property type="evidence" value="ECO:0000250"/>
    <property type="project" value="UniProtKB"/>
</dbReference>
<dbReference type="GO" id="GO:0030968">
    <property type="term" value="P:endoplasmic reticulum unfolded protein response"/>
    <property type="evidence" value="ECO:0007669"/>
    <property type="project" value="InterPro"/>
</dbReference>
<dbReference type="GO" id="GO:0036503">
    <property type="term" value="P:ERAD pathway"/>
    <property type="evidence" value="ECO:0000250"/>
    <property type="project" value="UniProtKB"/>
</dbReference>
<dbReference type="FunFam" id="2.70.130.10:FF:000001">
    <property type="entry name" value="Endoplasmic reticulum lectin 1"/>
    <property type="match status" value="1"/>
</dbReference>
<dbReference type="FunFam" id="2.70.130.10:FF:000003">
    <property type="entry name" value="Endoplasmic reticulum lectin 1"/>
    <property type="match status" value="1"/>
</dbReference>
<dbReference type="Gene3D" id="2.70.130.10">
    <property type="entry name" value="Mannose-6-phosphate receptor binding domain"/>
    <property type="match status" value="2"/>
</dbReference>
<dbReference type="InterPro" id="IPR009011">
    <property type="entry name" value="Man6P_isomerase_rcpt-bd_dom_sf"/>
</dbReference>
<dbReference type="InterPro" id="IPR044865">
    <property type="entry name" value="MRH_dom"/>
</dbReference>
<dbReference type="InterPro" id="IPR045149">
    <property type="entry name" value="OS-9-like"/>
</dbReference>
<dbReference type="InterPro" id="IPR012913">
    <property type="entry name" value="OS9-like_dom"/>
</dbReference>
<dbReference type="PANTHER" id="PTHR15414:SF0">
    <property type="entry name" value="ENDOPLASMIC RETICULUM LECTIN 1"/>
    <property type="match status" value="1"/>
</dbReference>
<dbReference type="PANTHER" id="PTHR15414">
    <property type="entry name" value="OS-9-RELATED"/>
    <property type="match status" value="1"/>
</dbReference>
<dbReference type="Pfam" id="PF07915">
    <property type="entry name" value="PRKCSH"/>
    <property type="match status" value="2"/>
</dbReference>
<dbReference type="SUPFAM" id="SSF50911">
    <property type="entry name" value="Mannose 6-phosphate receptor domain"/>
    <property type="match status" value="2"/>
</dbReference>
<dbReference type="PROSITE" id="PS51914">
    <property type="entry name" value="MRH"/>
    <property type="match status" value="2"/>
</dbReference>
<gene>
    <name type="primary">erlec1</name>
    <name type="ORF">TNeu121c15.1</name>
</gene>
<name>ERLEC_XENTR</name>
<accession>Q28IT1</accession>
<sequence length="481" mass="54698">MRRSDRLRCAGASLLVVLCGVFRSSFGGRTLPALSDDIPFRLKWPGPDFTLPTAGIPYKEDNYIIMTTADKEKYKCLLPLMANGNEEQDGEYKGPSPGALLEPLFKLSSCSYRIESYWTYEVCHGKYIRQYHEEKETGQKLSIQEYYLGKMMKKSTTEAGENQEEKESAESPKEIYTKNIEGQMTPYYPVEMINGTPCSLKQNQPRSSTVMYICHPESKHEILSVAEVTTCEYEVVILTPLLCNHPKYRFRTSPINDIFCQSMPGSPLRPQSLVKLEHQKEEIKSPLKPNKEEEQQLLREKFSTIHKPVTVGSQQQVTVGTTHISRLTDEQLIKEFLSGSYCFHGGVGWWKYEFCYGKYVHQYHEDKDTGKTTVVVGTWKADEHQEWAKKNLARAYMTTPDGVQTVKTVSHFYGGGDVCEVSEQPRQVIVKLKCKESESPHAVTVYMLEPQTCQYILGVESPVICKILDTADENGLLSIPN</sequence>
<feature type="signal peptide" evidence="2">
    <location>
        <begin position="1"/>
        <end position="27"/>
    </location>
</feature>
<feature type="chain" id="PRO_0000386452" description="Endoplasmic reticulum lectin 1">
    <location>
        <begin position="28"/>
        <end position="481"/>
    </location>
</feature>
<feature type="domain" description="MRH 1" evidence="3">
    <location>
        <begin position="108"/>
        <end position="245"/>
    </location>
</feature>
<feature type="domain" description="MRH 2" evidence="3">
    <location>
        <begin position="340"/>
        <end position="467"/>
    </location>
</feature>
<feature type="disulfide bond" evidence="3">
    <location>
        <begin position="110"/>
        <end position="123"/>
    </location>
</feature>
<feature type="disulfide bond" evidence="3">
    <location>
        <begin position="198"/>
        <end position="231"/>
    </location>
</feature>
<feature type="disulfide bond" evidence="3">
    <location>
        <begin position="214"/>
        <end position="243"/>
    </location>
</feature>
<feature type="disulfide bond" evidence="3">
    <location>
        <begin position="342"/>
        <end position="355"/>
    </location>
</feature>
<feature type="disulfide bond" evidence="3">
    <location>
        <begin position="419"/>
        <end position="453"/>
    </location>
</feature>
<feature type="disulfide bond" evidence="3">
    <location>
        <begin position="434"/>
        <end position="465"/>
    </location>
</feature>
<organism>
    <name type="scientific">Xenopus tropicalis</name>
    <name type="common">Western clawed frog</name>
    <name type="synonym">Silurana tropicalis</name>
    <dbReference type="NCBI Taxonomy" id="8364"/>
    <lineage>
        <taxon>Eukaryota</taxon>
        <taxon>Metazoa</taxon>
        <taxon>Chordata</taxon>
        <taxon>Craniata</taxon>
        <taxon>Vertebrata</taxon>
        <taxon>Euteleostomi</taxon>
        <taxon>Amphibia</taxon>
        <taxon>Batrachia</taxon>
        <taxon>Anura</taxon>
        <taxon>Pipoidea</taxon>
        <taxon>Pipidae</taxon>
        <taxon>Xenopodinae</taxon>
        <taxon>Xenopus</taxon>
        <taxon>Silurana</taxon>
    </lineage>
</organism>
<proteinExistence type="evidence at transcript level"/>
<reference key="1">
    <citation type="submission" date="2006-10" db="EMBL/GenBank/DDBJ databases">
        <authorList>
            <consortium name="Sanger Xenopus tropicalis EST/cDNA project"/>
        </authorList>
    </citation>
    <scope>NUCLEOTIDE SEQUENCE [LARGE SCALE MRNA]</scope>
    <source>
        <tissue>Neurula</tissue>
    </source>
</reference>
<reference key="2">
    <citation type="journal article" date="2006" name="J. Biol. Chem.">
        <title>The MRH protein Erlectin is a member of the endoplasmic reticulum synexpression group and functions in N-glycan recognition.</title>
        <authorList>
            <person name="Cruciat C.-M."/>
            <person name="Hassler C."/>
            <person name="Niehrs C."/>
        </authorList>
    </citation>
    <scope>DISRUPTION PHENOTYPE</scope>
</reference>
<comment type="function">
    <text evidence="1">Probable lectin that binds selectively to improperly folded lumenal proteins. May function in endoplasmic reticulum quality control and endoplasmic reticulum-associated degradation (ERAD) of both non-glycosylated proteins and glycoproteins (By similarity).</text>
</comment>
<comment type="subcellular location">
    <subcellularLocation>
        <location evidence="1">Endoplasmic reticulum lumen</location>
    </subcellularLocation>
</comment>
<comment type="disruption phenotype">
    <text evidence="4">Embryos display head and axial defects during organogenesis.</text>
</comment>
<protein>
    <recommendedName>
        <fullName>Endoplasmic reticulum lectin 1</fullName>
    </recommendedName>
    <alternativeName>
        <fullName>ER lectin</fullName>
        <shortName>Erlectin</shortName>
    </alternativeName>
</protein>